<gene>
    <name evidence="14" type="primary">acox-1.1</name>
    <name evidence="14" type="synonym">acox-1</name>
    <name evidence="14" type="ORF">F08A8.1</name>
</gene>
<evidence type="ECO:0000250" key="1">
    <source>
        <dbReference type="UniProtKB" id="O62137"/>
    </source>
</evidence>
<evidence type="ECO:0000255" key="2"/>
<evidence type="ECO:0000255" key="3">
    <source>
        <dbReference type="PIRNR" id="PIRNR000168"/>
    </source>
</evidence>
<evidence type="ECO:0000255" key="4">
    <source>
        <dbReference type="PIRSR" id="PIRSR000168-1"/>
    </source>
</evidence>
<evidence type="ECO:0000255" key="5">
    <source>
        <dbReference type="PIRSR" id="PIRSR000168-2"/>
    </source>
</evidence>
<evidence type="ECO:0000269" key="6">
    <source>
    </source>
</evidence>
<evidence type="ECO:0000269" key="7">
    <source>
    </source>
</evidence>
<evidence type="ECO:0000269" key="8">
    <source>
    </source>
</evidence>
<evidence type="ECO:0000269" key="9">
    <source>
    </source>
</evidence>
<evidence type="ECO:0000269" key="10">
    <source>
    </source>
</evidence>
<evidence type="ECO:0000305" key="11"/>
<evidence type="ECO:0000305" key="12">
    <source>
    </source>
</evidence>
<evidence type="ECO:0000312" key="13">
    <source>
        <dbReference type="Proteomes" id="UP000001940"/>
    </source>
</evidence>
<evidence type="ECO:0000312" key="14">
    <source>
        <dbReference type="WormBase" id="F08A8.1a"/>
    </source>
</evidence>
<evidence type="ECO:0000312" key="15">
    <source>
        <dbReference type="WormBase" id="F08A8.1b"/>
    </source>
</evidence>
<evidence type="ECO:0000312" key="16">
    <source>
        <dbReference type="WormBase" id="F08A8.1c"/>
    </source>
</evidence>
<evidence type="ECO:0007744" key="17">
    <source>
        <dbReference type="PDB" id="5K3G"/>
    </source>
</evidence>
<evidence type="ECO:0007744" key="18">
    <source>
        <dbReference type="PDB" id="5K3H"/>
    </source>
</evidence>
<evidence type="ECO:0007744" key="19">
    <source>
        <dbReference type="PDB" id="5K3I"/>
    </source>
</evidence>
<evidence type="ECO:0007829" key="20">
    <source>
        <dbReference type="PDB" id="5K3H"/>
    </source>
</evidence>
<evidence type="ECO:0007829" key="21">
    <source>
        <dbReference type="PDB" id="5K3I"/>
    </source>
</evidence>
<accession>O62140</accession>
<accession>Q2L6T9</accession>
<accession>Q7JK62</accession>
<comment type="function">
    <text evidence="6 7 8 9 10">Involved in the first step of peroxisomal beta-oxidation by catalyzing the desaturation of fatty acid-derived side chains (PubMed:25775534, PubMed:27551084, PubMed:29537254). Specifically, catalyzes the desaturation of fatty acids heptanoyl-CoA (C7), nonanoyl-CoA (C9), dodecanoyl-CoA (C12) and to a lesser extent pentanoyl-CoA (C5) and hexadecanoyl-CoA (C16), and hydroxylated fatty acid hydroxynonanoyl-CoA (PubMed:25775534, PubMed:27551084, PubMed:29537254). Also, catalyzes the desaturation fatty acid-derived side chains of ascaroside pheromones, which regulates development and behavior (PubMed:20610393, PubMed:25775534, PubMed:27551084, PubMed:29537254, PubMed:29863473). Specifically, shortens ascaroside with 5-carbon omega side chain (asc-omega-C5), 7-carbon side chain (asc-C7), 9-carbon side chain (asc-C9), 11-carbon side chain (asc-C11), 13-carbon side chain (asc-C13), 15-carbon side chain (asc-C15) and to a lesser extent ascarosides with 7-omega-carbon side chain (asc-omega-C7) (PubMed:25775534, PubMed:27551084, PubMed:29537254). Also shortens indol-3-carbonyl(IC)-ascarosides with 7-carbon side chain (IC-asc-C7) and to a lesser extent (IC)-ascarosides with 9-carbon side chain (IC-asc-C9) (PubMed:29863473). May associate and regulate the folding and/or the catalytic activity of other acyl-coenzyme A oxidases including acox-1.2, acox-1.3, acox-1.4 and acox-3 modulating the type of ascarosides produced (PubMed:25775534, PubMed:29537254, PubMed:29863473). In association with acox-1.3, catalyzes the desaturation of asc-C7-CoA but not of fatty acids or hydroxylated fatty acids (PubMed:25775534). Involved in the biosynthesis of asc-C6-MK (daumone 2) and asc-delta-C9 (daumone 3) but not asc-C7 (daumone 1); daumones are pheromones produced during unfavourable growth conditions which promote entry into the dauer stage (PubMed:20610393).</text>
</comment>
<comment type="catalytic activity">
    <reaction evidence="7 9 10">
        <text>nonanoyl-CoA + O2 = (2E)-nonenoyl-CoA + H2O2</text>
        <dbReference type="Rhea" id="RHEA:38987"/>
        <dbReference type="ChEBI" id="CHEBI:15379"/>
        <dbReference type="ChEBI" id="CHEBI:16240"/>
        <dbReference type="ChEBI" id="CHEBI:76291"/>
        <dbReference type="ChEBI" id="CHEBI:76292"/>
    </reaction>
</comment>
<comment type="catalytic activity">
    <reaction evidence="8 9 10">
        <text>dodecanoyl-CoA + O2 = (2E)-dodecenoyl-CoA + H2O2</text>
        <dbReference type="Rhea" id="RHEA:40171"/>
        <dbReference type="ChEBI" id="CHEBI:15379"/>
        <dbReference type="ChEBI" id="CHEBI:16240"/>
        <dbReference type="ChEBI" id="CHEBI:57330"/>
        <dbReference type="ChEBI" id="CHEBI:57375"/>
    </reaction>
</comment>
<comment type="catalytic activity">
    <reaction evidence="7 8 9 10">
        <text>a 2,3-saturated acyl-CoA + O2 = a (2E)-enoyl-CoA + H2O2</text>
        <dbReference type="Rhea" id="RHEA:38959"/>
        <dbReference type="ChEBI" id="CHEBI:15379"/>
        <dbReference type="ChEBI" id="CHEBI:16240"/>
        <dbReference type="ChEBI" id="CHEBI:58856"/>
        <dbReference type="ChEBI" id="CHEBI:65111"/>
        <dbReference type="EC" id="1.3.3.6"/>
    </reaction>
</comment>
<comment type="catalytic activity">
    <reaction evidence="7 8">
        <text>heptanoyl-CoA + O2 = (2E)-heptenoyl-CoA + H2O2</text>
        <dbReference type="Rhea" id="RHEA:66204"/>
        <dbReference type="ChEBI" id="CHEBI:15379"/>
        <dbReference type="ChEBI" id="CHEBI:16240"/>
        <dbReference type="ChEBI" id="CHEBI:78811"/>
        <dbReference type="ChEBI" id="CHEBI:166980"/>
    </reaction>
</comment>
<comment type="catalytic activity">
    <reaction evidence="7">
        <text>(8R)-8-hydroxynonanoyl-CoA + O2 = (2E,8R)-8-hydroxynonenoyl-CoA + H2O2</text>
        <dbReference type="Rhea" id="RHEA:66208"/>
        <dbReference type="ChEBI" id="CHEBI:15379"/>
        <dbReference type="ChEBI" id="CHEBI:16240"/>
        <dbReference type="ChEBI" id="CHEBI:166978"/>
        <dbReference type="ChEBI" id="CHEBI:166979"/>
    </reaction>
</comment>
<comment type="catalytic activity">
    <reaction evidence="7 8">
        <text>pentanoyl-CoA + O2 = (2E)-pentenoyl-CoA + H2O2</text>
        <dbReference type="Rhea" id="RHEA:66200"/>
        <dbReference type="ChEBI" id="CHEBI:15379"/>
        <dbReference type="ChEBI" id="CHEBI:16240"/>
        <dbReference type="ChEBI" id="CHEBI:57389"/>
        <dbReference type="ChEBI" id="CHEBI:86160"/>
    </reaction>
</comment>
<comment type="catalytic activity">
    <reaction evidence="8">
        <text>hexadecanoyl-CoA + O2 = (2E)-hexadecenoyl-CoA + H2O2</text>
        <dbReference type="Rhea" id="RHEA:40167"/>
        <dbReference type="ChEBI" id="CHEBI:15379"/>
        <dbReference type="ChEBI" id="CHEBI:16240"/>
        <dbReference type="ChEBI" id="CHEBI:57379"/>
        <dbReference type="ChEBI" id="CHEBI:61526"/>
    </reaction>
</comment>
<comment type="catalytic activity">
    <reaction evidence="10">
        <text>IC-asc-C7-CoA + O2 = IC-asc-DeltaC7-CoA + H2O2</text>
        <dbReference type="Rhea" id="RHEA:66232"/>
        <dbReference type="ChEBI" id="CHEBI:15379"/>
        <dbReference type="ChEBI" id="CHEBI:16240"/>
        <dbReference type="ChEBI" id="CHEBI:166976"/>
        <dbReference type="ChEBI" id="CHEBI:166977"/>
    </reaction>
</comment>
<comment type="catalytic activity">
    <reaction evidence="10">
        <text>IC-asc-C9-CoA + O2 = IC-asc-DeltaC9-CoA + H2O2</text>
        <dbReference type="Rhea" id="RHEA:66236"/>
        <dbReference type="ChEBI" id="CHEBI:15379"/>
        <dbReference type="ChEBI" id="CHEBI:16240"/>
        <dbReference type="ChEBI" id="CHEBI:166973"/>
        <dbReference type="ChEBI" id="CHEBI:166974"/>
    </reaction>
</comment>
<comment type="catalytic activity">
    <reaction evidence="7">
        <text>asc-omegaC5-CoA + O2 = asc-omegaDeltaC5-CoA + H2O2</text>
        <dbReference type="Rhea" id="RHEA:66212"/>
        <dbReference type="ChEBI" id="CHEBI:15379"/>
        <dbReference type="ChEBI" id="CHEBI:16240"/>
        <dbReference type="ChEBI" id="CHEBI:140060"/>
        <dbReference type="ChEBI" id="CHEBI:166969"/>
    </reaction>
</comment>
<comment type="catalytic activity">
    <reaction evidence="7 8">
        <text>asc-C7-CoA + O2 = asc-DeltaC7-CoA + H2O2</text>
        <dbReference type="Rhea" id="RHEA:66216"/>
        <dbReference type="ChEBI" id="CHEBI:15379"/>
        <dbReference type="ChEBI" id="CHEBI:16240"/>
        <dbReference type="ChEBI" id="CHEBI:139646"/>
        <dbReference type="ChEBI" id="CHEBI:139712"/>
    </reaction>
</comment>
<comment type="catalytic activity">
    <reaction evidence="8">
        <text>asc-omegaC7-CoA + O2 = asc-omegaDeltaC7-CoA + H2O2</text>
        <dbReference type="Rhea" id="RHEA:66220"/>
        <dbReference type="ChEBI" id="CHEBI:15379"/>
        <dbReference type="ChEBI" id="CHEBI:16240"/>
        <dbReference type="ChEBI" id="CHEBI:139994"/>
        <dbReference type="ChEBI" id="CHEBI:140057"/>
    </reaction>
</comment>
<comment type="catalytic activity">
    <reaction evidence="7 8 10">
        <text>asc-C9-CoA + O2 = asc-DeltaC9-CoA + H2O2</text>
        <dbReference type="Rhea" id="RHEA:66224"/>
        <dbReference type="ChEBI" id="CHEBI:15379"/>
        <dbReference type="ChEBI" id="CHEBI:16240"/>
        <dbReference type="ChEBI" id="CHEBI:139617"/>
        <dbReference type="ChEBI" id="CHEBI:139706"/>
    </reaction>
</comment>
<comment type="catalytic activity">
    <reaction evidence="10">
        <text>asc-C13-CoA + O2 = asc-DeltaC13-CoA + H2O2</text>
        <dbReference type="Rhea" id="RHEA:66228"/>
        <dbReference type="ChEBI" id="CHEBI:15379"/>
        <dbReference type="ChEBI" id="CHEBI:16240"/>
        <dbReference type="ChEBI" id="CHEBI:139652"/>
        <dbReference type="ChEBI" id="CHEBI:139655"/>
    </reaction>
</comment>
<comment type="cofactor">
    <cofactor evidence="8">
        <name>FAD</name>
        <dbReference type="ChEBI" id="CHEBI:57692"/>
    </cofactor>
</comment>
<comment type="activity regulation">
    <text evidence="8">Activated by ATP (PubMed:27551084). ATP binding leads to a conformational change that promotes FAD cofactor binding and enzyme activity (PubMed:27551084). ATP binding likely occurs during acox-1.1 folding and/or dimer formation (PubMed:27551084).</text>
</comment>
<comment type="biophysicochemical properties">
    <kinetics>
        <KM evidence="7">42.7 uM for asc-C9-CoA (at 30 degrees Celsius and pH 7.4)</KM>
        <KM evidence="7">60 uM for asc-C7-CoA (at 30 degrees Celsius, pH 7.4 and in complex with acox-1.3)</KM>
        <KM evidence="7">152 uM for asc-omega-C5-CoA (at 30 degrees Celsius, pH 7.4 and in complex with acox-1.2)</KM>
        <text evidence="7">kcat is 252 sec(-1) with asc-C9-CoA (at 30 degrees Celsius and pH 7.4) (PubMed:25775534). kcat is 144 sec(-1) with asc-C7-CoA (at 30 degrees Celsius, pH 7.4 and in complex with acox-1.3) (PubMed:25775534). kcat is 478 sec(-1) with asc-omega-C5-CoA (at 30 degrees Celsius, pH 7.4 and in complex with acox-1.2) (PubMed:25775534).</text>
    </kinetics>
</comment>
<comment type="pathway">
    <text evidence="7 8 9">Lipid metabolism; peroxisomal fatty acid beta-oxidation.</text>
</comment>
<comment type="subunit">
    <text evidence="7 12">Homodimer (Probable). Forms a heterodimer with acox-1.2 (PubMed:25775534). Forms a heterodimer with acox-1.3; the interaction may be important for the stability of acox-1.3 (PubMed:25775534).</text>
</comment>
<comment type="subcellular location">
    <subcellularLocation>
        <location evidence="6 9 10">Peroxisome</location>
    </subcellularLocation>
</comment>
<comment type="alternative products">
    <event type="alternative splicing"/>
    <isoform>
        <id>O62140-1</id>
        <name evidence="14">a</name>
        <sequence type="displayed"/>
    </isoform>
    <isoform>
        <id>O62140-2</id>
        <name evidence="15">b</name>
        <sequence type="described" ref="VSP_060949"/>
    </isoform>
    <isoform>
        <id>O62140-3</id>
        <name evidence="16">c</name>
        <sequence type="described" ref="VSP_060950"/>
    </isoform>
</comment>
<comment type="tissue specificity">
    <text evidence="6 10">Expressed in hypodermis and intestine.</text>
</comment>
<comment type="induction">
    <text evidence="6">Induced by high temperatures (25 degrees Celsius).</text>
</comment>
<comment type="disruption phenotype">
    <text evidence="6">RNAi-mediated knockdown abolishes production of dauer pheromone daumone 2, severely reduces production of daumone 3 and increases production of daumone 1.</text>
</comment>
<comment type="similarity">
    <text evidence="3">Belongs to the acyl-CoA oxidase family.</text>
</comment>
<dbReference type="EC" id="1.3.3.-" evidence="7 8 9 10"/>
<dbReference type="EC" id="1.3.3.6" evidence="7 8 9 10"/>
<dbReference type="EMBL" id="BX284601">
    <property type="protein sequence ID" value="CAB16867.1"/>
    <property type="molecule type" value="Genomic_DNA"/>
</dbReference>
<dbReference type="EMBL" id="BX284601">
    <property type="protein sequence ID" value="CAE54894.1"/>
    <property type="molecule type" value="Genomic_DNA"/>
</dbReference>
<dbReference type="EMBL" id="BX284601">
    <property type="protein sequence ID" value="CAJ58493.1"/>
    <property type="molecule type" value="Genomic_DNA"/>
</dbReference>
<dbReference type="PIR" id="T20571">
    <property type="entry name" value="T20571"/>
</dbReference>
<dbReference type="RefSeq" id="NP_001021089.1">
    <molecule id="O62140-1"/>
    <property type="nucleotide sequence ID" value="NM_001025918.8"/>
</dbReference>
<dbReference type="RefSeq" id="NP_001021090.1">
    <property type="nucleotide sequence ID" value="NM_001025919.3"/>
</dbReference>
<dbReference type="RefSeq" id="NP_001040649.1">
    <molecule id="O62140-3"/>
    <property type="nucleotide sequence ID" value="NM_001047184.4"/>
</dbReference>
<dbReference type="RefSeq" id="NP_001379414.1">
    <molecule id="O62140-2"/>
    <property type="nucleotide sequence ID" value="NM_001392960.1"/>
</dbReference>
<dbReference type="PDB" id="5K3G">
    <property type="method" value="X-ray"/>
    <property type="resolution" value="2.86 A"/>
    <property type="chains" value="A/B/C/D=1-674"/>
</dbReference>
<dbReference type="PDB" id="5K3H">
    <property type="method" value="X-ray"/>
    <property type="resolution" value="2.48 A"/>
    <property type="chains" value="A/B/C/D/E/F/G/H=1-674"/>
</dbReference>
<dbReference type="PDB" id="5K3I">
    <property type="method" value="X-ray"/>
    <property type="resolution" value="2.68 A"/>
    <property type="chains" value="A/B/C/D/E/F/G/H=1-674"/>
</dbReference>
<dbReference type="PDBsum" id="5K3G"/>
<dbReference type="PDBsum" id="5K3H"/>
<dbReference type="PDBsum" id="5K3I"/>
<dbReference type="SMR" id="O62140"/>
<dbReference type="FunCoup" id="O62140">
    <property type="interactions" value="1910"/>
</dbReference>
<dbReference type="IntAct" id="O62140">
    <property type="interactions" value="1"/>
</dbReference>
<dbReference type="MINT" id="O62140"/>
<dbReference type="STRING" id="6239.F08A8.1a.1"/>
<dbReference type="PaxDb" id="6239-F08A8.1a.2"/>
<dbReference type="PeptideAtlas" id="O62140"/>
<dbReference type="EnsemblMetazoa" id="F08A8.1a.1">
    <molecule id="O62140-1"/>
    <property type="protein sequence ID" value="F08A8.1a.1"/>
    <property type="gene ID" value="WBGene00008564"/>
</dbReference>
<dbReference type="EnsemblMetazoa" id="F08A8.1a.2">
    <molecule id="O62140-1"/>
    <property type="protein sequence ID" value="F08A8.1a.2"/>
    <property type="gene ID" value="WBGene00008564"/>
</dbReference>
<dbReference type="EnsemblMetazoa" id="F08A8.1b.1">
    <molecule id="O62140-2"/>
    <property type="protein sequence ID" value="F08A8.1b.1"/>
    <property type="gene ID" value="WBGene00008564"/>
</dbReference>
<dbReference type="EnsemblMetazoa" id="F08A8.1b.2">
    <molecule id="O62140-2"/>
    <property type="protein sequence ID" value="F08A8.1b.2"/>
    <property type="gene ID" value="WBGene00008564"/>
</dbReference>
<dbReference type="EnsemblMetazoa" id="F08A8.1c.1">
    <molecule id="O62140-3"/>
    <property type="protein sequence ID" value="F08A8.1c.1"/>
    <property type="gene ID" value="WBGene00008564"/>
</dbReference>
<dbReference type="GeneID" id="173162"/>
<dbReference type="KEGG" id="cel:CELE_F08A8.1"/>
<dbReference type="UCSC" id="F08A8.1b.4">
    <property type="organism name" value="c. elegans"/>
</dbReference>
<dbReference type="AGR" id="WB:WBGene00008564"/>
<dbReference type="CTD" id="173162"/>
<dbReference type="WormBase" id="F08A8.1a">
    <molecule id="O62140-1"/>
    <property type="protein sequence ID" value="CE17633"/>
    <property type="gene ID" value="WBGene00008564"/>
    <property type="gene designation" value="acox-1.1"/>
</dbReference>
<dbReference type="WormBase" id="F08A8.1b">
    <molecule id="O62140-2"/>
    <property type="protein sequence ID" value="CE36125"/>
    <property type="gene ID" value="WBGene00008564"/>
    <property type="gene designation" value="acox-1.1"/>
</dbReference>
<dbReference type="WormBase" id="F08A8.1c">
    <molecule id="O62140-3"/>
    <property type="protein sequence ID" value="CE39570"/>
    <property type="gene ID" value="WBGene00008564"/>
    <property type="gene designation" value="acox-1.1"/>
</dbReference>
<dbReference type="eggNOG" id="KOG0136">
    <property type="taxonomic scope" value="Eukaryota"/>
</dbReference>
<dbReference type="GeneTree" id="ENSGT00940000168827"/>
<dbReference type="HOGENOM" id="CLU_014629_3_1_1"/>
<dbReference type="InParanoid" id="O62140"/>
<dbReference type="OMA" id="GINHEYM"/>
<dbReference type="OrthoDB" id="538336at2759"/>
<dbReference type="PhylomeDB" id="O62140"/>
<dbReference type="BRENDA" id="1.3.3.6">
    <property type="organism ID" value="1045"/>
</dbReference>
<dbReference type="Reactome" id="R-CEL-193368">
    <property type="pathway name" value="Synthesis of bile acids and bile salts via 7alpha-hydroxycholesterol"/>
</dbReference>
<dbReference type="Reactome" id="R-CEL-389887">
    <property type="pathway name" value="Beta-oxidation of pristanoyl-CoA"/>
</dbReference>
<dbReference type="Reactome" id="R-CEL-9033241">
    <property type="pathway name" value="Peroxisomal protein import"/>
</dbReference>
<dbReference type="UniPathway" id="UPA00661"/>
<dbReference type="PRO" id="PR:O62140"/>
<dbReference type="Proteomes" id="UP000001940">
    <property type="component" value="Chromosome I"/>
</dbReference>
<dbReference type="Bgee" id="WBGene00008564">
    <property type="expression patterns" value="Expressed in larva and 4 other cell types or tissues"/>
</dbReference>
<dbReference type="ExpressionAtlas" id="O62140">
    <property type="expression patterns" value="baseline and differential"/>
</dbReference>
<dbReference type="GO" id="GO:0005782">
    <property type="term" value="C:peroxisomal matrix"/>
    <property type="evidence" value="ECO:0000314"/>
    <property type="project" value="WormBase"/>
</dbReference>
<dbReference type="GO" id="GO:0005777">
    <property type="term" value="C:peroxisome"/>
    <property type="evidence" value="ECO:0000314"/>
    <property type="project" value="UniProtKB"/>
</dbReference>
<dbReference type="GO" id="GO:0003997">
    <property type="term" value="F:acyl-CoA oxidase activity"/>
    <property type="evidence" value="ECO:0000314"/>
    <property type="project" value="UniProtKB"/>
</dbReference>
<dbReference type="GO" id="GO:0005524">
    <property type="term" value="F:ATP binding"/>
    <property type="evidence" value="ECO:0000314"/>
    <property type="project" value="UniProtKB"/>
</dbReference>
<dbReference type="GO" id="GO:0071949">
    <property type="term" value="F:FAD binding"/>
    <property type="evidence" value="ECO:0007669"/>
    <property type="project" value="InterPro"/>
</dbReference>
<dbReference type="GO" id="GO:0005504">
    <property type="term" value="F:fatty acid binding"/>
    <property type="evidence" value="ECO:0000318"/>
    <property type="project" value="GO_Central"/>
</dbReference>
<dbReference type="GO" id="GO:0050660">
    <property type="term" value="F:flavin adenine dinucleotide binding"/>
    <property type="evidence" value="ECO:0000318"/>
    <property type="project" value="GO_Central"/>
</dbReference>
<dbReference type="GO" id="GO:1904070">
    <property type="term" value="P:ascaroside biosynthetic process"/>
    <property type="evidence" value="ECO:0000314"/>
    <property type="project" value="UniProtKB"/>
</dbReference>
<dbReference type="GO" id="GO:0033540">
    <property type="term" value="P:fatty acid beta-oxidation using acyl-CoA oxidase"/>
    <property type="evidence" value="ECO:0000314"/>
    <property type="project" value="UniProtKB"/>
</dbReference>
<dbReference type="GO" id="GO:0042811">
    <property type="term" value="P:pheromone biosynthetic process"/>
    <property type="evidence" value="ECO:0000315"/>
    <property type="project" value="UniProtKB"/>
</dbReference>
<dbReference type="FunFam" id="1.10.540.10:FF:000006">
    <property type="entry name" value="Acyl-coenzyme A oxidase"/>
    <property type="match status" value="1"/>
</dbReference>
<dbReference type="FunFam" id="1.20.140.10:FF:000005">
    <property type="entry name" value="Acyl-coenzyme A oxidase"/>
    <property type="match status" value="1"/>
</dbReference>
<dbReference type="FunFam" id="1.20.140.10:FF:000013">
    <property type="entry name" value="Acyl-coenzyme A oxidase"/>
    <property type="match status" value="1"/>
</dbReference>
<dbReference type="FunFam" id="2.40.110.10:FF:000003">
    <property type="entry name" value="Acyl-coenzyme A oxidase"/>
    <property type="match status" value="1"/>
</dbReference>
<dbReference type="Gene3D" id="1.10.540.10">
    <property type="entry name" value="Acyl-CoA dehydrogenase/oxidase, N-terminal domain"/>
    <property type="match status" value="1"/>
</dbReference>
<dbReference type="Gene3D" id="2.40.110.10">
    <property type="entry name" value="Butyryl-CoA Dehydrogenase, subunit A, domain 2"/>
    <property type="match status" value="1"/>
</dbReference>
<dbReference type="Gene3D" id="1.20.140.10">
    <property type="entry name" value="Butyryl-CoA Dehydrogenase, subunit A, domain 3"/>
    <property type="match status" value="2"/>
</dbReference>
<dbReference type="InterPro" id="IPR055060">
    <property type="entry name" value="ACOX_C_alpha1"/>
</dbReference>
<dbReference type="InterPro" id="IPR029320">
    <property type="entry name" value="Acyl-CoA_ox_N"/>
</dbReference>
<dbReference type="InterPro" id="IPR046373">
    <property type="entry name" value="Acyl-CoA_Oxase/DH_mid-dom_sf"/>
</dbReference>
<dbReference type="InterPro" id="IPR012258">
    <property type="entry name" value="Acyl-CoA_oxidase"/>
</dbReference>
<dbReference type="InterPro" id="IPR002655">
    <property type="entry name" value="Acyl-CoA_oxidase_C"/>
</dbReference>
<dbReference type="InterPro" id="IPR036250">
    <property type="entry name" value="AcylCo_DH-like_C"/>
</dbReference>
<dbReference type="InterPro" id="IPR037069">
    <property type="entry name" value="AcylCoA_DH/ox_N_sf"/>
</dbReference>
<dbReference type="InterPro" id="IPR009100">
    <property type="entry name" value="AcylCoA_DH/oxidase_NM_dom_sf"/>
</dbReference>
<dbReference type="PANTHER" id="PTHR10909:SF368">
    <property type="entry name" value="ACYL-COENZYME A OXIDASE ACOX-1.1"/>
    <property type="match status" value="1"/>
</dbReference>
<dbReference type="PANTHER" id="PTHR10909">
    <property type="entry name" value="ELECTRON TRANSPORT OXIDOREDUCTASE"/>
    <property type="match status" value="1"/>
</dbReference>
<dbReference type="Pfam" id="PF01756">
    <property type="entry name" value="ACOX"/>
    <property type="match status" value="1"/>
</dbReference>
<dbReference type="Pfam" id="PF22924">
    <property type="entry name" value="ACOX_C_alpha1"/>
    <property type="match status" value="1"/>
</dbReference>
<dbReference type="Pfam" id="PF14749">
    <property type="entry name" value="Acyl-CoA_ox_N"/>
    <property type="match status" value="1"/>
</dbReference>
<dbReference type="PIRSF" id="PIRSF000168">
    <property type="entry name" value="Acyl-CoA_oxidase"/>
    <property type="match status" value="1"/>
</dbReference>
<dbReference type="SUPFAM" id="SSF47203">
    <property type="entry name" value="Acyl-CoA dehydrogenase C-terminal domain-like"/>
    <property type="match status" value="2"/>
</dbReference>
<dbReference type="SUPFAM" id="SSF56645">
    <property type="entry name" value="Acyl-CoA dehydrogenase NM domain-like"/>
    <property type="match status" value="1"/>
</dbReference>
<reference evidence="13" key="1">
    <citation type="journal article" date="1998" name="Science">
        <title>Genome sequence of the nematode C. elegans: a platform for investigating biology.</title>
        <authorList>
            <consortium name="The C. elegans sequencing consortium"/>
        </authorList>
    </citation>
    <scope>NUCLEOTIDE SEQUENCE [LARGE SCALE GENOMIC DNA]</scope>
    <source>
        <strain evidence="13">Bristol N2</strain>
    </source>
</reference>
<reference evidence="11" key="2">
    <citation type="journal article" date="2010" name="J. Biol. Chem.">
        <title>Contribution of the peroxisomal acox gene to the dynamic balance of daumone production in Caenorhabditis elegans.</title>
        <authorList>
            <person name="Joo H.J."/>
            <person name="Kim K.Y."/>
            <person name="Yim Y.H."/>
            <person name="Jin Y.X."/>
            <person name="Kim H."/>
            <person name="Kim M.Y."/>
            <person name="Paik Y.K."/>
        </authorList>
    </citation>
    <scope>FUNCTION</scope>
    <scope>SUBCELLULAR LOCATION</scope>
    <scope>TISSUE SPECIFICITY</scope>
    <scope>INDUCTION</scope>
    <scope>DISRUPTION PHENOTYPE</scope>
</reference>
<reference evidence="11" key="3">
    <citation type="journal article" date="2015" name="Proc. Natl. Acad. Sci. U.S.A.">
        <title>Acyl-CoA oxidase complexes control the chemical message produced by Caenorhabditis elegans.</title>
        <authorList>
            <person name="Zhang X."/>
            <person name="Feng L."/>
            <person name="Chinta S."/>
            <person name="Singh P."/>
            <person name="Wang Y."/>
            <person name="Nunnery J.K."/>
            <person name="Butcher R.A."/>
        </authorList>
    </citation>
    <scope>FUNCTION</scope>
    <scope>CATALYTIC ACTIVITY</scope>
    <scope>BIOPHYSICOCHEMICAL PROPERTIES</scope>
    <scope>PATHWAY</scope>
    <scope>SUBUNIT</scope>
    <scope>INTERACTION WITH ACOX-1.2 AND ACOX-1.3</scope>
</reference>
<reference evidence="11" key="4">
    <citation type="journal article" date="2018" name="ACS Chem. Biol.">
        <title>Acyl-CoA Oxidases Fine-Tune the Production of Ascaroside Pheromones with Specific Side Chain Lengths.</title>
        <authorList>
            <person name="Zhang X."/>
            <person name="Wang Y."/>
            <person name="Perez D.H."/>
            <person name="Jones Lipinski R.A."/>
            <person name="Butcher R.A."/>
        </authorList>
    </citation>
    <scope>FUNCTION</scope>
    <scope>CATALYTIC ACTIVITY</scope>
    <scope>PATHWAY</scope>
    <scope>SUBCELLULAR LOCATION</scope>
    <scope>MUTAGENESIS OF HIS-396 AND GLU-434</scope>
</reference>
<reference evidence="11" key="5">
    <citation type="journal article" date="2018" name="Elife">
        <title>Biosynthetic tailoring of existing ascaroside pheromones alters their biological function in C. elegans.</title>
        <authorList>
            <person name="Zhou Y."/>
            <person name="Wang Y."/>
            <person name="Zhang X."/>
            <person name="Bhar S."/>
            <person name="Jones Lipinski R.A."/>
            <person name="Han J."/>
            <person name="Feng L."/>
            <person name="Butcher R.A."/>
        </authorList>
    </citation>
    <scope>FUNCTION</scope>
    <scope>CATALYTIC ACTIVITY</scope>
    <scope>SUBCELLULAR LOCATION</scope>
    <scope>TISSUE SPECIFICITY</scope>
    <scope>MUTAGENESIS OF GLU-434</scope>
</reference>
<reference evidence="17 18 19" key="6">
    <citation type="journal article" date="2016" name="Proc. Natl. Acad. Sci. U.S.A.">
        <title>Structural characterization of acyl-CoA oxidases reveals a direct link between pheromone biosynthesis and metabolic state in Caenorhabditis elegans.</title>
        <authorList>
            <person name="Zhang X."/>
            <person name="Li K."/>
            <person name="Jones R.A."/>
            <person name="Bruner S.D."/>
            <person name="Butcher R.A."/>
        </authorList>
    </citation>
    <scope>X-RAY CRYSTALLOGRAPHY (2.48 ANGSTROMS) OF APO FORM AND MUTANT ALA-434 IN COMPLEX WITH ATP AND FAD</scope>
    <scope>FUNCTION</scope>
    <scope>CATALYTIC ACTIVITY</scope>
    <scope>COFACTOR</scope>
    <scope>ACTIVITY REGULATION</scope>
    <scope>PATHWAY</scope>
    <scope>SUBUNIT</scope>
    <scope>SUBSTRATE SPECIFICITY</scope>
    <scope>MUTAGENESIS OF VAL-118; TRP-189; TYR-245; GLY-301; GLN-340; LYS-391; HIS-396; GLU-434; ASN-437; ARG-533 AND ARG-536</scope>
</reference>
<proteinExistence type="evidence at protein level"/>
<organism evidence="13">
    <name type="scientific">Caenorhabditis elegans</name>
    <dbReference type="NCBI Taxonomy" id="6239"/>
    <lineage>
        <taxon>Eukaryota</taxon>
        <taxon>Metazoa</taxon>
        <taxon>Ecdysozoa</taxon>
        <taxon>Nematoda</taxon>
        <taxon>Chromadorea</taxon>
        <taxon>Rhabditida</taxon>
        <taxon>Rhabditina</taxon>
        <taxon>Rhabditomorpha</taxon>
        <taxon>Rhabditoidea</taxon>
        <taxon>Rhabditidae</taxon>
        <taxon>Peloderinae</taxon>
        <taxon>Caenorhabditis</taxon>
    </lineage>
</organism>
<protein>
    <recommendedName>
        <fullName evidence="11">Acyl-coenzyme A oxidase acox-1.1</fullName>
        <ecNumber evidence="7 8 9 10">1.3.3.-</ecNumber>
        <ecNumber evidence="7 8 9 10">1.3.3.6</ecNumber>
    </recommendedName>
</protein>
<sequence>MVHLNKTIQEGDNPDLTAERLTATFDTHAMAAQIYGGEMRARRRREITAKLAEIPELHDSMPLPYMTREEKIMESARKLTVLTQRMSEIIDPTDAGELYHLNNEVLGIEGNPMALHGVMFIPALNAQASDEQQAKWLIRALRREIIGTYAQTEMGHGTNLQNLETTATYDIGTQEFVLHTPKITALKWWPGNLGKSSNYAVVVAHMYIKGKNFGPHTFMVPLRDEKTHKPLPGITIGDIGPKMAYNIVDNGFLGFNNYRIPRTNLLMRHTKVEADGTYIKPPHAKINYSAMVHVRSYMLTGQAIMLSYALNIATRYSAVRRQGQIDKNEPEVKVLEYQTQQHRLFPFIARAYAFQFAGAETVKLYERVLKEMKSGNVSLMADLHALTSGLKSVVTHQTGEGIEQARMACGGHGYSMASYISEIYGVAIGGCTYEGENMVMLLQLARYLVKSAALVKSGKASQLGPLVAYLGARSEPTSLIDRVPNGGITEYIKTFQHIAKRQTLKAANKFFGLMENGEKREIAWNKSSVELNRASRLHTRLFIVEAFARRVNEIGDITIKEALSDLLHLHVNYELLDVATYALEDGFMSSTQLDYVRDQLYFYLQKIRPNAVSLLDSWEFSDRELRSVLGRRDGHVYENLFKWAKESPLNKTDVLPSVDTYLKPMMEKARQSKL</sequence>
<name>ACX11_CAEEL</name>
<feature type="chain" id="PRO_0000452302" description="Acyl-coenzyme A oxidase acox-1.1">
    <location>
        <begin position="1"/>
        <end position="674"/>
    </location>
</feature>
<feature type="short sequence motif" description="Microbody targeting signal" evidence="2">
    <location>
        <begin position="672"/>
        <end position="674"/>
    </location>
</feature>
<feature type="active site" description="Proton acceptor" evidence="4">
    <location>
        <position position="434"/>
    </location>
</feature>
<feature type="binding site" description="in other chain" evidence="8 19">
    <location>
        <begin position="149"/>
        <end position="152"/>
    </location>
    <ligand>
        <name>FAD</name>
        <dbReference type="ChEBI" id="CHEBI:57692"/>
        <note>ligand shared between dimeric partners</note>
    </ligand>
</feature>
<feature type="binding site" description="in other chain" evidence="8 19">
    <location>
        <begin position="157"/>
        <end position="158"/>
    </location>
    <ligand>
        <name>FAD</name>
        <dbReference type="ChEBI" id="CHEBI:57692"/>
        <note>ligand shared between dimeric partners</note>
    </ligand>
</feature>
<feature type="binding site" description="in other chain" evidence="5 8 19">
    <location>
        <position position="191"/>
    </location>
    <ligand>
        <name>FAD</name>
        <dbReference type="ChEBI" id="CHEBI:57692"/>
        <note>ligand shared between dimeric partners</note>
    </ligand>
</feature>
<feature type="binding site" evidence="1">
    <location>
        <begin position="285"/>
        <end position="288"/>
    </location>
    <ligand>
        <name>substrate</name>
    </ligand>
</feature>
<feature type="binding site" evidence="1">
    <location>
        <position position="295"/>
    </location>
    <ligand>
        <name>substrate</name>
    </ligand>
</feature>
<feature type="binding site" evidence="8 19">
    <location>
        <position position="320"/>
    </location>
    <ligand>
        <name>FAD</name>
        <dbReference type="ChEBI" id="CHEBI:57692"/>
        <note>ligand shared between dimeric partners</note>
    </ligand>
</feature>
<feature type="binding site" evidence="8 19">
    <location>
        <begin position="340"/>
        <end position="343"/>
    </location>
    <ligand>
        <name>FAD</name>
        <dbReference type="ChEBI" id="CHEBI:57692"/>
        <note>ligand shared between dimeric partners</note>
    </ligand>
</feature>
<feature type="binding site" evidence="1">
    <location>
        <position position="342"/>
    </location>
    <ligand>
        <name>ATP</name>
        <dbReference type="ChEBI" id="CHEBI:30616"/>
        <note>ligand shared between dimeric partners</note>
    </ligand>
</feature>
<feature type="binding site" description="in other chain" evidence="8 19">
    <location>
        <position position="392"/>
    </location>
    <ligand>
        <name>ATP</name>
        <dbReference type="ChEBI" id="CHEBI:30616"/>
        <note>ligand shared between dimeric partners</note>
    </ligand>
</feature>
<feature type="binding site" description="in other chain" evidence="8 19">
    <location>
        <position position="396"/>
    </location>
    <ligand>
        <name>ATP</name>
        <dbReference type="ChEBI" id="CHEBI:30616"/>
        <note>ligand shared between dimeric partners</note>
    </ligand>
</feature>
<feature type="binding site" evidence="8 19">
    <location>
        <position position="404"/>
    </location>
    <ligand>
        <name>ATP</name>
        <dbReference type="ChEBI" id="CHEBI:30616"/>
        <note>ligand shared between dimeric partners</note>
    </ligand>
</feature>
<feature type="binding site" evidence="1">
    <location>
        <position position="411"/>
    </location>
    <ligand>
        <name>FAD</name>
        <dbReference type="ChEBI" id="CHEBI:57692"/>
        <note>ligand shared between dimeric partners</note>
    </ligand>
</feature>
<feature type="binding site" evidence="1">
    <location>
        <begin position="433"/>
        <end position="434"/>
    </location>
    <ligand>
        <name>substrate</name>
    </ligand>
</feature>
<feature type="binding site" description="in other chain" evidence="1">
    <location>
        <position position="436"/>
    </location>
    <ligand>
        <name>FAD</name>
        <dbReference type="ChEBI" id="CHEBI:57692"/>
        <note>ligand shared between dimeric partners</note>
    </ligand>
</feature>
<feature type="binding site" description="in other chain" evidence="8 19">
    <location>
        <begin position="533"/>
        <end position="536"/>
    </location>
    <ligand>
        <name>ATP</name>
        <dbReference type="ChEBI" id="CHEBI:30616"/>
        <note>ligand shared between dimeric partners</note>
    </ligand>
</feature>
<feature type="binding site" description="in other chain" evidence="8 19">
    <location>
        <position position="581"/>
    </location>
    <ligand>
        <name>ATP</name>
        <dbReference type="ChEBI" id="CHEBI:30616"/>
        <note>ligand shared between dimeric partners</note>
    </ligand>
</feature>
<feature type="splice variant" id="VSP_060949" description="In isoform b." evidence="11">
    <location>
        <begin position="1"/>
        <end position="112"/>
    </location>
</feature>
<feature type="splice variant" id="VSP_060950" description="In isoform c." evidence="11">
    <location>
        <begin position="1"/>
        <end position="29"/>
    </location>
</feature>
<feature type="mutagenesis site" description="Shows catalytic activity toward asc-omega-C5-CoA without affecting activity toward asc-C9-CoA, asc-omega-C7-CoA or fatty acyl-CoA; when associated with F-245 and E-301." evidence="8">
    <original>V</original>
    <variation>A</variation>
    <location>
        <position position="118"/>
    </location>
</feature>
<feature type="mutagenesis site" description="Loss of ATP and FAD binding." evidence="8">
    <original>W</original>
    <variation>A</variation>
    <location>
        <position position="189"/>
    </location>
</feature>
<feature type="mutagenesis site" description="Shows catalytic activity toward asc-omega-C5-CoA without affecting activity toward asc-C9-CoA, asc-omega-C7-CoA or fatty acyl-CoA; when associated with A-118 and E-301." evidence="8">
    <original>Y</original>
    <variation>F</variation>
    <location>
        <position position="245"/>
    </location>
</feature>
<feature type="mutagenesis site" description="Reduced catalytic activity toward ascaroside asc-C9-CoA, but not toward fatty acyl-CoA substrates. Has a slight activity toward asc-omega-C5-CoA. Shows catalytic activity toward asc-omega-C5-CoA without affecting activity toward asc-C9-CoA, asc-omega-C7-CoA or fatty acyl-CoA; when associated with A-118 and F-245." evidence="8">
    <original>G</original>
    <variation>E</variation>
    <location>
        <position position="301"/>
    </location>
</feature>
<feature type="mutagenesis site" description="Loss of ATP and FAD binding." evidence="8">
    <original>Q</original>
    <variation>A</variation>
    <location>
        <position position="340"/>
    </location>
</feature>
<feature type="mutagenesis site" description="Loss of ATP binding and severe reduction in FAD binding." evidence="8">
    <original>K</original>
    <variation>A</variation>
    <location>
        <position position="391"/>
    </location>
</feature>
<feature type="mutagenesis site" description="Loss of ATP and FAD binding. Severe loss of catalytic activity toward ascaroside-CoA and fatty acyl-CoA substrates. Defects in the processing of ascarosides with 13-, 11-, 9-, and 7-carbon side chains. No defect in subcellular location." evidence="8 9">
    <original>H</original>
    <variation>G</variation>
    <location>
        <position position="396"/>
    </location>
</feature>
<feature type="mutagenesis site" description="In reb2; severe reduction in catalytic activity toward fatty-acid CoA and ascaroside-CoA. Increases ATP and FAD binding. No defect in the production of various ascarosides apart from a slight accumulation of asc-C11. Accumulation of indol-3-carbonyl (IC)-asc-C7. Enhances accumulation of IC-asc-C7 and IC-asc-C9 in a acox-1.4 (reb6) and acox-3 (tm4033) mutant background." evidence="8 9 10">
    <original>E</original>
    <variation>A</variation>
    <location>
        <position position="434"/>
    </location>
</feature>
<feature type="mutagenesis site" description="Loss of ATP binding and severe reduction in FAD binding." evidence="8">
    <original>N</original>
    <variation>A</variation>
    <location>
        <position position="437"/>
    </location>
</feature>
<feature type="mutagenesis site" description="Loss of ATP binding." evidence="8">
    <original>R</original>
    <variation>E</variation>
    <location>
        <position position="533"/>
    </location>
</feature>
<feature type="mutagenesis site" description="Loss of ATP binding." evidence="8">
    <original>R</original>
    <variation>E</variation>
    <location>
        <position position="536"/>
    </location>
</feature>
<feature type="helix" evidence="20">
    <location>
        <begin position="14"/>
        <end position="20"/>
    </location>
</feature>
<feature type="helix" evidence="20">
    <location>
        <begin position="27"/>
        <end position="35"/>
    </location>
</feature>
<feature type="helix" evidence="20">
    <location>
        <begin position="38"/>
        <end position="52"/>
    </location>
</feature>
<feature type="helix" evidence="20">
    <location>
        <begin position="55"/>
        <end position="57"/>
    </location>
</feature>
<feature type="helix" evidence="20">
    <location>
        <begin position="63"/>
        <end position="65"/>
    </location>
</feature>
<feature type="helix" evidence="20">
    <location>
        <begin position="68"/>
        <end position="85"/>
    </location>
</feature>
<feature type="helix" evidence="20">
    <location>
        <begin position="86"/>
        <end position="88"/>
    </location>
</feature>
<feature type="helix" evidence="20">
    <location>
        <begin position="95"/>
        <end position="105"/>
    </location>
</feature>
<feature type="helix" evidence="20">
    <location>
        <begin position="114"/>
        <end position="118"/>
    </location>
</feature>
<feature type="helix" evidence="20">
    <location>
        <begin position="120"/>
        <end position="127"/>
    </location>
</feature>
<feature type="helix" evidence="20">
    <location>
        <begin position="130"/>
        <end position="135"/>
    </location>
</feature>
<feature type="helix" evidence="20">
    <location>
        <begin position="137"/>
        <end position="141"/>
    </location>
</feature>
<feature type="strand" evidence="20">
    <location>
        <begin position="147"/>
        <end position="150"/>
    </location>
</feature>
<feature type="strand" evidence="20">
    <location>
        <begin position="156"/>
        <end position="158"/>
    </location>
</feature>
<feature type="helix" evidence="20">
    <location>
        <begin position="160"/>
        <end position="162"/>
    </location>
</feature>
<feature type="strand" evidence="20">
    <location>
        <begin position="166"/>
        <end position="170"/>
    </location>
</feature>
<feature type="turn" evidence="20">
    <location>
        <begin position="171"/>
        <end position="174"/>
    </location>
</feature>
<feature type="strand" evidence="20">
    <location>
        <begin position="175"/>
        <end position="179"/>
    </location>
</feature>
<feature type="helix" evidence="20">
    <location>
        <begin position="183"/>
        <end position="185"/>
    </location>
</feature>
<feature type="strand" evidence="20">
    <location>
        <begin position="186"/>
        <end position="188"/>
    </location>
</feature>
<feature type="turn" evidence="20">
    <location>
        <begin position="191"/>
        <end position="196"/>
    </location>
</feature>
<feature type="strand" evidence="20">
    <location>
        <begin position="198"/>
        <end position="208"/>
    </location>
</feature>
<feature type="strand" evidence="20">
    <location>
        <begin position="211"/>
        <end position="221"/>
    </location>
</feature>
<feature type="turn" evidence="20">
    <location>
        <begin position="225"/>
        <end position="227"/>
    </location>
</feature>
<feature type="strand" evidence="20">
    <location>
        <begin position="234"/>
        <end position="238"/>
    </location>
</feature>
<feature type="strand" evidence="20">
    <location>
        <begin position="242"/>
        <end position="244"/>
    </location>
</feature>
<feature type="strand" evidence="20">
    <location>
        <begin position="251"/>
        <end position="261"/>
    </location>
</feature>
<feature type="helix" evidence="20">
    <location>
        <begin position="262"/>
        <end position="264"/>
    </location>
</feature>
<feature type="helix" evidence="20">
    <location>
        <begin position="298"/>
        <end position="319"/>
    </location>
</feature>
<feature type="helix" evidence="20">
    <location>
        <begin position="334"/>
        <end position="336"/>
    </location>
</feature>
<feature type="helix" evidence="20">
    <location>
        <begin position="338"/>
        <end position="365"/>
    </location>
</feature>
<feature type="strand" evidence="21">
    <location>
        <begin position="373"/>
        <end position="375"/>
    </location>
</feature>
<feature type="helix" evidence="20">
    <location>
        <begin position="383"/>
        <end position="402"/>
    </location>
</feature>
<feature type="helix" evidence="20">
    <location>
        <begin position="407"/>
        <end position="414"/>
    </location>
</feature>
<feature type="turn" evidence="20">
    <location>
        <begin position="416"/>
        <end position="418"/>
    </location>
</feature>
<feature type="helix" evidence="20">
    <location>
        <begin position="420"/>
        <end position="428"/>
    </location>
</feature>
<feature type="helix" evidence="21">
    <location>
        <begin position="429"/>
        <end position="431"/>
    </location>
</feature>
<feature type="turn" evidence="21">
    <location>
        <begin position="432"/>
        <end position="434"/>
    </location>
</feature>
<feature type="helix" evidence="20">
    <location>
        <begin position="438"/>
        <end position="456"/>
    </location>
</feature>
<feature type="helix" evidence="20">
    <location>
        <begin position="460"/>
        <end position="462"/>
    </location>
</feature>
<feature type="helix" evidence="20">
    <location>
        <begin position="465"/>
        <end position="471"/>
    </location>
</feature>
<feature type="strand" evidence="20">
    <location>
        <begin position="482"/>
        <end position="485"/>
    </location>
</feature>
<feature type="helix" evidence="20">
    <location>
        <begin position="488"/>
        <end position="515"/>
    </location>
</feature>
<feature type="helix" evidence="20">
    <location>
        <begin position="520"/>
        <end position="525"/>
    </location>
</feature>
<feature type="helix" evidence="20">
    <location>
        <begin position="528"/>
        <end position="553"/>
    </location>
</feature>
<feature type="helix" evidence="20">
    <location>
        <begin position="557"/>
        <end position="577"/>
    </location>
</feature>
<feature type="helix" evidence="20">
    <location>
        <begin position="579"/>
        <end position="584"/>
    </location>
</feature>
<feature type="strand" evidence="21">
    <location>
        <begin position="586"/>
        <end position="588"/>
    </location>
</feature>
<feature type="helix" evidence="20">
    <location>
        <begin position="590"/>
        <end position="616"/>
    </location>
</feature>
<feature type="helix" evidence="20">
    <location>
        <begin position="622"/>
        <end position="625"/>
    </location>
</feature>
<feature type="helix" evidence="20">
    <location>
        <begin position="636"/>
        <end position="645"/>
    </location>
</feature>
<feature type="helix" evidence="20">
    <location>
        <begin position="648"/>
        <end position="650"/>
    </location>
</feature>
<feature type="strand" evidence="20">
    <location>
        <begin position="651"/>
        <end position="654"/>
    </location>
</feature>
<feature type="helix" evidence="20">
    <location>
        <begin position="656"/>
        <end position="660"/>
    </location>
</feature>
<feature type="helix" evidence="20">
    <location>
        <begin position="662"/>
        <end position="668"/>
    </location>
</feature>
<keyword id="KW-0002">3D-structure</keyword>
<keyword id="KW-0025">Alternative splicing</keyword>
<keyword id="KW-0067">ATP-binding</keyword>
<keyword id="KW-0274">FAD</keyword>
<keyword id="KW-0276">Fatty acid metabolism</keyword>
<keyword id="KW-0285">Flavoprotein</keyword>
<keyword id="KW-0443">Lipid metabolism</keyword>
<keyword id="KW-0547">Nucleotide-binding</keyword>
<keyword id="KW-0560">Oxidoreductase</keyword>
<keyword id="KW-0576">Peroxisome</keyword>
<keyword id="KW-1185">Reference proteome</keyword>